<protein>
    <recommendedName>
        <fullName>Seipin</fullName>
    </recommendedName>
    <alternativeName>
        <fullName>Bernardinelli-Seip congenital lipodystrophy type 2 protein homolog</fullName>
    </alternativeName>
</protein>
<gene>
    <name evidence="7" type="primary">BSCL2</name>
</gene>
<reference key="1">
    <citation type="journal article" date="2005" name="BMC Genomics">
        <title>Characterization of 954 bovine full-CDS cDNA sequences.</title>
        <authorList>
            <person name="Harhay G.P."/>
            <person name="Sonstegard T.S."/>
            <person name="Keele J.W."/>
            <person name="Heaton M.P."/>
            <person name="Clawson M.L."/>
            <person name="Snelling W.M."/>
            <person name="Wiedmann R.T."/>
            <person name="Van Tassell C.P."/>
            <person name="Smith T.P.L."/>
        </authorList>
    </citation>
    <scope>NUCLEOTIDE SEQUENCE [LARGE SCALE MRNA]</scope>
</reference>
<dbReference type="EMBL" id="BT020874">
    <property type="protein sequence ID" value="AAX08891.1"/>
    <property type="molecule type" value="mRNA"/>
</dbReference>
<dbReference type="RefSeq" id="NP_001015589.1">
    <property type="nucleotide sequence ID" value="NM_001015589.1"/>
</dbReference>
<dbReference type="SMR" id="Q5E9P6"/>
<dbReference type="FunCoup" id="Q5E9P6">
    <property type="interactions" value="1765"/>
</dbReference>
<dbReference type="STRING" id="9913.ENSBTAP00000058695"/>
<dbReference type="GlyCosmos" id="Q5E9P6">
    <property type="glycosylation" value="2 sites, No reported glycans"/>
</dbReference>
<dbReference type="GlyGen" id="Q5E9P6">
    <property type="glycosylation" value="2 sites"/>
</dbReference>
<dbReference type="PaxDb" id="9913-ENSBTAP00000003254"/>
<dbReference type="GeneID" id="513558"/>
<dbReference type="KEGG" id="bta:513558"/>
<dbReference type="CTD" id="26580"/>
<dbReference type="eggNOG" id="KOG4200">
    <property type="taxonomic scope" value="Eukaryota"/>
</dbReference>
<dbReference type="HOGENOM" id="CLU_049458_1_1_1"/>
<dbReference type="InParanoid" id="Q5E9P6"/>
<dbReference type="OrthoDB" id="3990054at2759"/>
<dbReference type="Proteomes" id="UP000009136">
    <property type="component" value="Unplaced"/>
</dbReference>
<dbReference type="GO" id="GO:0005789">
    <property type="term" value="C:endoplasmic reticulum membrane"/>
    <property type="evidence" value="ECO:0000250"/>
    <property type="project" value="UniProtKB"/>
</dbReference>
<dbReference type="GO" id="GO:0005811">
    <property type="term" value="C:lipid droplet"/>
    <property type="evidence" value="ECO:0007669"/>
    <property type="project" value="UniProtKB-SubCell"/>
</dbReference>
<dbReference type="GO" id="GO:0045444">
    <property type="term" value="P:fat cell differentiation"/>
    <property type="evidence" value="ECO:0000250"/>
    <property type="project" value="UniProtKB"/>
</dbReference>
<dbReference type="GO" id="GO:0016042">
    <property type="term" value="P:lipid catabolic process"/>
    <property type="evidence" value="ECO:0007669"/>
    <property type="project" value="UniProtKB-KW"/>
</dbReference>
<dbReference type="GO" id="GO:0140042">
    <property type="term" value="P:lipid droplet formation"/>
    <property type="evidence" value="ECO:0000250"/>
    <property type="project" value="UniProtKB"/>
</dbReference>
<dbReference type="GO" id="GO:0034389">
    <property type="term" value="P:lipid droplet organization"/>
    <property type="evidence" value="ECO:0000250"/>
    <property type="project" value="UniProtKB"/>
</dbReference>
<dbReference type="GO" id="GO:0019915">
    <property type="term" value="P:lipid storage"/>
    <property type="evidence" value="ECO:0000250"/>
    <property type="project" value="UniProtKB"/>
</dbReference>
<dbReference type="GO" id="GO:0050995">
    <property type="term" value="P:negative regulation of lipid catabolic process"/>
    <property type="evidence" value="ECO:0000250"/>
    <property type="project" value="UniProtKB"/>
</dbReference>
<dbReference type="CDD" id="cd23993">
    <property type="entry name" value="Seipin"/>
    <property type="match status" value="1"/>
</dbReference>
<dbReference type="InterPro" id="IPR009617">
    <property type="entry name" value="Seipin"/>
</dbReference>
<dbReference type="PANTHER" id="PTHR21212">
    <property type="entry name" value="BERNARDINELLI-SEIP CONGENITAL LIPODYSTROPHY 2 HOMOLOG BSCL2 PROTEIN"/>
    <property type="match status" value="1"/>
</dbReference>
<dbReference type="PANTHER" id="PTHR21212:SF0">
    <property type="entry name" value="SEIPIN"/>
    <property type="match status" value="1"/>
</dbReference>
<dbReference type="Pfam" id="PF06775">
    <property type="entry name" value="Seipin"/>
    <property type="match status" value="1"/>
</dbReference>
<proteinExistence type="evidence at transcript level"/>
<sequence length="394" mass="44016">MVNDPPVPALLWAQEMGHVMAGRARKLLLQFGVFFCTILLLLWVSVFLYGSFYYSYMPTVSHLSPVHFHYRTDCESSTSLLCSFPVANVTLAKGGRDRVLMYGQPYRVTLELELPESPVNQDLGMFLVTISCYTRGGRIISTSSRSVMLHYRSSLLQMLDTLVFSSLLLFGFAEQKQLLEVELYPEYRENSYVPTTGAIIEIHSKRIQMYGAYLRIHAHFTGLRYLLYNFPMTCAFVGVASNFTFLSVIVLFSYMQWVWGGIWPRQRLSLQVNIRNRKRSRKDIQRKVSAHQPGPQGQEESPQLSPVTEDGESHADPSGTEGQLSEEEKTEQQPLSGEEELEPEASDGSGSWEDAALLTEANLAASGSAPAPETVGSSEPSAGSVRQRPICSSS</sequence>
<feature type="chain" id="PRO_0000191678" description="Seipin">
    <location>
        <begin position="1"/>
        <end position="394"/>
    </location>
</feature>
<feature type="topological domain" description="Cytoplasmic" evidence="4">
    <location>
        <begin position="1"/>
        <end position="27"/>
    </location>
</feature>
<feature type="transmembrane region" description="Helical" evidence="4">
    <location>
        <begin position="28"/>
        <end position="48"/>
    </location>
</feature>
<feature type="topological domain" description="Lumenal" evidence="4">
    <location>
        <begin position="49"/>
        <end position="242"/>
    </location>
</feature>
<feature type="transmembrane region" description="Helical" evidence="4">
    <location>
        <begin position="243"/>
        <end position="263"/>
    </location>
</feature>
<feature type="topological domain" description="Cytoplasmic" evidence="4">
    <location>
        <begin position="264"/>
        <end position="394"/>
    </location>
</feature>
<feature type="region of interest" description="Disordered" evidence="5">
    <location>
        <begin position="281"/>
        <end position="394"/>
    </location>
</feature>
<feature type="compositionally biased region" description="Low complexity" evidence="5">
    <location>
        <begin position="292"/>
        <end position="303"/>
    </location>
</feature>
<feature type="modified residue" description="Phosphoserine" evidence="2">
    <location>
        <position position="289"/>
    </location>
</feature>
<feature type="modified residue" description="Phosphoserine" evidence="1">
    <location>
        <position position="346"/>
    </location>
</feature>
<feature type="modified residue" description="Phosphoserine" evidence="1">
    <location>
        <position position="351"/>
    </location>
</feature>
<feature type="glycosylation site" description="N-linked (GlcNAc...) asparagine" evidence="2">
    <location>
        <position position="88"/>
    </location>
</feature>
<feature type="glycosylation site" description="N-linked (GlcNAc...) asparagine" evidence="4">
    <location>
        <position position="242"/>
    </location>
</feature>
<name>BSCL2_BOVIN</name>
<comment type="function">
    <text evidence="2 3">Plays a crucial role in the formation of lipid droplets (LDs) which are storage organelles at the center of lipid and energy homeostasis (By similarity). In association with LDAF1, defines the sites of LD formation in the ER (By similarity). Also required for growth and maturation of small nascent LDs into larger mature LDs (By similarity). Mediates the formation and/or stabilization of endoplasmic reticulum-lipid droplets (ER-LD) contacts, facilitating protein and lipid delivery from the ER into growing LDs (By similarity). Regulates the maturation of ZFYVE1-positive nascent LDs and the function of the RAB18-ZFYVE1 complex in mediating the formation of ER-LD contacts (By similarity). Binds anionic phospholipids including phosphatidic acid (By similarity). Plays an important role in the differentiation and development of adipocytes (By similarity).</text>
</comment>
<comment type="subunit">
    <text evidence="2">Undecamer (an oligomer having eleven subunits) (By similarity). Oligomerization is important for its function in lipid droplet formation (By similarity). Interacts with LDAF1 to form an oligomeric complex (By similarity). Interacts with RAB18 (By similarity). Interacts with ZFYVE1 in a RAB18-dependent manner (By similarity).</text>
</comment>
<comment type="subcellular location">
    <subcellularLocation>
        <location evidence="2">Endoplasmic reticulum membrane</location>
        <topology evidence="4">Multi-pass membrane protein</topology>
    </subcellularLocation>
    <subcellularLocation>
        <location evidence="2">Lipid droplet</location>
    </subcellularLocation>
    <text evidence="2">Localizes at endoplasmic reticulum-lipid droplets (ER-LD) contact sites.</text>
</comment>
<comment type="similarity">
    <text evidence="6">Belongs to the seipin family.</text>
</comment>
<evidence type="ECO:0000250" key="1">
    <source>
        <dbReference type="UniProtKB" id="Q5FVJ6"/>
    </source>
</evidence>
<evidence type="ECO:0000250" key="2">
    <source>
        <dbReference type="UniProtKB" id="Q96G97"/>
    </source>
</evidence>
<evidence type="ECO:0000250" key="3">
    <source>
        <dbReference type="UniProtKB" id="Q9Z2E9"/>
    </source>
</evidence>
<evidence type="ECO:0000255" key="4"/>
<evidence type="ECO:0000256" key="5">
    <source>
        <dbReference type="SAM" id="MobiDB-lite"/>
    </source>
</evidence>
<evidence type="ECO:0000305" key="6"/>
<evidence type="ECO:0000312" key="7">
    <source>
        <dbReference type="EMBL" id="AAX08891.1"/>
    </source>
</evidence>
<keyword id="KW-0256">Endoplasmic reticulum</keyword>
<keyword id="KW-0325">Glycoprotein</keyword>
<keyword id="KW-0442">Lipid degradation</keyword>
<keyword id="KW-0551">Lipid droplet</keyword>
<keyword id="KW-0443">Lipid metabolism</keyword>
<keyword id="KW-0472">Membrane</keyword>
<keyword id="KW-0597">Phosphoprotein</keyword>
<keyword id="KW-1185">Reference proteome</keyword>
<keyword id="KW-0812">Transmembrane</keyword>
<keyword id="KW-1133">Transmembrane helix</keyword>
<organism>
    <name type="scientific">Bos taurus</name>
    <name type="common">Bovine</name>
    <dbReference type="NCBI Taxonomy" id="9913"/>
    <lineage>
        <taxon>Eukaryota</taxon>
        <taxon>Metazoa</taxon>
        <taxon>Chordata</taxon>
        <taxon>Craniata</taxon>
        <taxon>Vertebrata</taxon>
        <taxon>Euteleostomi</taxon>
        <taxon>Mammalia</taxon>
        <taxon>Eutheria</taxon>
        <taxon>Laurasiatheria</taxon>
        <taxon>Artiodactyla</taxon>
        <taxon>Ruminantia</taxon>
        <taxon>Pecora</taxon>
        <taxon>Bovidae</taxon>
        <taxon>Bovinae</taxon>
        <taxon>Bos</taxon>
    </lineage>
</organism>
<accession>Q5E9P6</accession>